<feature type="chain" id="PRO_1000061654" description="Coenzyme PQQ synthesis protein B">
    <location>
        <begin position="1"/>
        <end position="303"/>
    </location>
</feature>
<sequence>MYIQILGSAAGGGFPQWNCNCVNCKGYRDGTLRASARTQSSIALSDDGEHWILCNASPDIRAQLQAFAPMQPARALRDTGINAIVLLDSQIDHTTGLLSLREGCPHQVWCTDMVHQDLTTGFPLFNMLSHWNGGLVWNRIELEGSFVIEACPNLRFTPFPLRSAAPPYSPHRFDPHPGDNLGLLVEDTRTGGKLFYAPGLGQVDDKLLQMMGGADCLLVDGTLWEDDEMQRRGVGTRTGREMGHLAQNGPGGMLEVLDGFPRQRKVLIHINNTNPILDEDSPERAEVVRRGVEVAFDGMSLKL</sequence>
<accession>Q1IG46</accession>
<reference key="1">
    <citation type="journal article" date="2006" name="Nat. Biotechnol.">
        <title>Complete genome sequence of the entomopathogenic and metabolically versatile soil bacterium Pseudomonas entomophila.</title>
        <authorList>
            <person name="Vodovar N."/>
            <person name="Vallenet D."/>
            <person name="Cruveiller S."/>
            <person name="Rouy Z."/>
            <person name="Barbe V."/>
            <person name="Acosta C."/>
            <person name="Cattolico L."/>
            <person name="Jubin C."/>
            <person name="Lajus A."/>
            <person name="Segurens B."/>
            <person name="Vacherie B."/>
            <person name="Wincker P."/>
            <person name="Weissenbach J."/>
            <person name="Lemaitre B."/>
            <person name="Medigue C."/>
            <person name="Boccard F."/>
        </authorList>
    </citation>
    <scope>NUCLEOTIDE SEQUENCE [LARGE SCALE GENOMIC DNA]</scope>
    <source>
        <strain>L48</strain>
    </source>
</reference>
<protein>
    <recommendedName>
        <fullName evidence="1">Coenzyme PQQ synthesis protein B</fullName>
    </recommendedName>
    <alternativeName>
        <fullName evidence="1">Pyrroloquinoline quinone biosynthesis protein B</fullName>
    </alternativeName>
</protein>
<gene>
    <name evidence="1" type="primary">pqqB</name>
    <name type="ordered locus">PSEEN0397</name>
</gene>
<keyword id="KW-0884">PQQ biosynthesis</keyword>
<keyword id="KW-0813">Transport</keyword>
<organism>
    <name type="scientific">Pseudomonas entomophila (strain L48)</name>
    <dbReference type="NCBI Taxonomy" id="384676"/>
    <lineage>
        <taxon>Bacteria</taxon>
        <taxon>Pseudomonadati</taxon>
        <taxon>Pseudomonadota</taxon>
        <taxon>Gammaproteobacteria</taxon>
        <taxon>Pseudomonadales</taxon>
        <taxon>Pseudomonadaceae</taxon>
        <taxon>Pseudomonas</taxon>
    </lineage>
</organism>
<dbReference type="EMBL" id="CT573326">
    <property type="protein sequence ID" value="CAK13356.1"/>
    <property type="molecule type" value="Genomic_DNA"/>
</dbReference>
<dbReference type="RefSeq" id="WP_011531815.1">
    <property type="nucleotide sequence ID" value="NC_008027.1"/>
</dbReference>
<dbReference type="SMR" id="Q1IG46"/>
<dbReference type="STRING" id="384676.PSEEN0397"/>
<dbReference type="GeneID" id="32803737"/>
<dbReference type="KEGG" id="pen:PSEEN0397"/>
<dbReference type="eggNOG" id="COG1235">
    <property type="taxonomic scope" value="Bacteria"/>
</dbReference>
<dbReference type="HOGENOM" id="CLU_061120_0_0_6"/>
<dbReference type="OrthoDB" id="9778305at2"/>
<dbReference type="UniPathway" id="UPA00539"/>
<dbReference type="Proteomes" id="UP000000658">
    <property type="component" value="Chromosome"/>
</dbReference>
<dbReference type="GO" id="GO:0018189">
    <property type="term" value="P:pyrroloquinoline quinone biosynthetic process"/>
    <property type="evidence" value="ECO:0007669"/>
    <property type="project" value="UniProtKB-UniRule"/>
</dbReference>
<dbReference type="CDD" id="cd16274">
    <property type="entry name" value="PQQB-like_MBL-fold"/>
    <property type="match status" value="1"/>
</dbReference>
<dbReference type="Gene3D" id="3.60.15.10">
    <property type="entry name" value="Ribonuclease Z/Hydroxyacylglutathione hydrolase-like"/>
    <property type="match status" value="1"/>
</dbReference>
<dbReference type="HAMAP" id="MF_00653">
    <property type="entry name" value="PQQ_syn_PqqB"/>
    <property type="match status" value="1"/>
</dbReference>
<dbReference type="InterPro" id="IPR001279">
    <property type="entry name" value="Metallo-B-lactamas"/>
</dbReference>
<dbReference type="InterPro" id="IPR011842">
    <property type="entry name" value="PQQ_synth_PqqB"/>
</dbReference>
<dbReference type="InterPro" id="IPR036866">
    <property type="entry name" value="RibonucZ/Hydroxyglut_hydro"/>
</dbReference>
<dbReference type="NCBIfam" id="TIGR02108">
    <property type="entry name" value="PQQ_syn_pqqB"/>
    <property type="match status" value="1"/>
</dbReference>
<dbReference type="PANTHER" id="PTHR42663:SF7">
    <property type="entry name" value="COENZYME PQQ SYNTHESIS PROTEIN B"/>
    <property type="match status" value="1"/>
</dbReference>
<dbReference type="PANTHER" id="PTHR42663">
    <property type="entry name" value="HYDROLASE C777.06C-RELATED-RELATED"/>
    <property type="match status" value="1"/>
</dbReference>
<dbReference type="Pfam" id="PF12706">
    <property type="entry name" value="Lactamase_B_2"/>
    <property type="match status" value="1"/>
</dbReference>
<dbReference type="SUPFAM" id="SSF56281">
    <property type="entry name" value="Metallo-hydrolase/oxidoreductase"/>
    <property type="match status" value="1"/>
</dbReference>
<name>PQQB_PSEE4</name>
<comment type="function">
    <text evidence="1">May be involved in the transport of PQQ or its precursor to the periplasm.</text>
</comment>
<comment type="pathway">
    <text evidence="1">Cofactor biosynthesis; pyrroloquinoline quinone biosynthesis.</text>
</comment>
<comment type="similarity">
    <text evidence="1">Belongs to the PqqB family.</text>
</comment>
<evidence type="ECO:0000255" key="1">
    <source>
        <dbReference type="HAMAP-Rule" id="MF_00653"/>
    </source>
</evidence>
<proteinExistence type="inferred from homology"/>